<feature type="signal peptide" description="Tat-type signal" evidence="1">
    <location>
        <begin position="1"/>
        <end position="29"/>
    </location>
</feature>
<feature type="chain" id="PRO_1000073642" description="Periplasmic nitrate reductase" evidence="1">
    <location>
        <begin position="30"/>
        <end position="829"/>
    </location>
</feature>
<feature type="domain" description="4Fe-4S Mo/W bis-MGD-type" evidence="1">
    <location>
        <begin position="41"/>
        <end position="97"/>
    </location>
</feature>
<feature type="binding site" evidence="1">
    <location>
        <position position="48"/>
    </location>
    <ligand>
        <name>[4Fe-4S] cluster</name>
        <dbReference type="ChEBI" id="CHEBI:49883"/>
    </ligand>
</feature>
<feature type="binding site" evidence="1">
    <location>
        <position position="51"/>
    </location>
    <ligand>
        <name>[4Fe-4S] cluster</name>
        <dbReference type="ChEBI" id="CHEBI:49883"/>
    </ligand>
</feature>
<feature type="binding site" evidence="1">
    <location>
        <position position="55"/>
    </location>
    <ligand>
        <name>[4Fe-4S] cluster</name>
        <dbReference type="ChEBI" id="CHEBI:49883"/>
    </ligand>
</feature>
<feature type="binding site" evidence="1">
    <location>
        <position position="83"/>
    </location>
    <ligand>
        <name>[4Fe-4S] cluster</name>
        <dbReference type="ChEBI" id="CHEBI:49883"/>
    </ligand>
</feature>
<feature type="binding site" evidence="1">
    <location>
        <position position="85"/>
    </location>
    <ligand>
        <name>Mo-bis(molybdopterin guanine dinucleotide)</name>
        <dbReference type="ChEBI" id="CHEBI:60539"/>
    </ligand>
</feature>
<feature type="binding site" evidence="1">
    <location>
        <position position="152"/>
    </location>
    <ligand>
        <name>Mo-bis(molybdopterin guanine dinucleotide)</name>
        <dbReference type="ChEBI" id="CHEBI:60539"/>
    </ligand>
</feature>
<feature type="binding site" evidence="1">
    <location>
        <position position="177"/>
    </location>
    <ligand>
        <name>Mo-bis(molybdopterin guanine dinucleotide)</name>
        <dbReference type="ChEBI" id="CHEBI:60539"/>
    </ligand>
</feature>
<feature type="binding site" evidence="1">
    <location>
        <position position="181"/>
    </location>
    <ligand>
        <name>Mo-bis(molybdopterin guanine dinucleotide)</name>
        <dbReference type="ChEBI" id="CHEBI:60539"/>
    </ligand>
</feature>
<feature type="binding site" evidence="1">
    <location>
        <begin position="214"/>
        <end position="221"/>
    </location>
    <ligand>
        <name>Mo-bis(molybdopterin guanine dinucleotide)</name>
        <dbReference type="ChEBI" id="CHEBI:60539"/>
    </ligand>
</feature>
<feature type="binding site" evidence="1">
    <location>
        <begin position="245"/>
        <end position="249"/>
    </location>
    <ligand>
        <name>Mo-bis(molybdopterin guanine dinucleotide)</name>
        <dbReference type="ChEBI" id="CHEBI:60539"/>
    </ligand>
</feature>
<feature type="binding site" evidence="1">
    <location>
        <begin position="264"/>
        <end position="266"/>
    </location>
    <ligand>
        <name>Mo-bis(molybdopterin guanine dinucleotide)</name>
        <dbReference type="ChEBI" id="CHEBI:60539"/>
    </ligand>
</feature>
<feature type="binding site" evidence="1">
    <location>
        <position position="374"/>
    </location>
    <ligand>
        <name>Mo-bis(molybdopterin guanine dinucleotide)</name>
        <dbReference type="ChEBI" id="CHEBI:60539"/>
    </ligand>
</feature>
<feature type="binding site" evidence="1">
    <location>
        <position position="378"/>
    </location>
    <ligand>
        <name>Mo-bis(molybdopterin guanine dinucleotide)</name>
        <dbReference type="ChEBI" id="CHEBI:60539"/>
    </ligand>
</feature>
<feature type="binding site" evidence="1">
    <location>
        <position position="484"/>
    </location>
    <ligand>
        <name>Mo-bis(molybdopterin guanine dinucleotide)</name>
        <dbReference type="ChEBI" id="CHEBI:60539"/>
    </ligand>
</feature>
<feature type="binding site" evidence="1">
    <location>
        <begin position="510"/>
        <end position="511"/>
    </location>
    <ligand>
        <name>Mo-bis(molybdopterin guanine dinucleotide)</name>
        <dbReference type="ChEBI" id="CHEBI:60539"/>
    </ligand>
</feature>
<feature type="binding site" evidence="1">
    <location>
        <position position="533"/>
    </location>
    <ligand>
        <name>Mo-bis(molybdopterin guanine dinucleotide)</name>
        <dbReference type="ChEBI" id="CHEBI:60539"/>
    </ligand>
</feature>
<feature type="binding site" evidence="1">
    <location>
        <position position="560"/>
    </location>
    <ligand>
        <name>Mo-bis(molybdopterin guanine dinucleotide)</name>
        <dbReference type="ChEBI" id="CHEBI:60539"/>
    </ligand>
</feature>
<feature type="binding site" evidence="1">
    <location>
        <begin position="718"/>
        <end position="727"/>
    </location>
    <ligand>
        <name>Mo-bis(molybdopterin guanine dinucleotide)</name>
        <dbReference type="ChEBI" id="CHEBI:60539"/>
    </ligand>
</feature>
<feature type="binding site" evidence="1">
    <location>
        <position position="794"/>
    </location>
    <ligand>
        <name>substrate</name>
    </ligand>
</feature>
<feature type="binding site" evidence="1">
    <location>
        <position position="802"/>
    </location>
    <ligand>
        <name>Mo-bis(molybdopterin guanine dinucleotide)</name>
        <dbReference type="ChEBI" id="CHEBI:60539"/>
    </ligand>
</feature>
<feature type="binding site" evidence="1">
    <location>
        <position position="819"/>
    </location>
    <ligand>
        <name>Mo-bis(molybdopterin guanine dinucleotide)</name>
        <dbReference type="ChEBI" id="CHEBI:60539"/>
    </ligand>
</feature>
<organism>
    <name type="scientific">Vibrio cholerae serotype O1 (strain ATCC 39541 / Classical Ogawa 395 / O395)</name>
    <dbReference type="NCBI Taxonomy" id="345073"/>
    <lineage>
        <taxon>Bacteria</taxon>
        <taxon>Pseudomonadati</taxon>
        <taxon>Pseudomonadota</taxon>
        <taxon>Gammaproteobacteria</taxon>
        <taxon>Vibrionales</taxon>
        <taxon>Vibrionaceae</taxon>
        <taxon>Vibrio</taxon>
    </lineage>
</organism>
<comment type="function">
    <text evidence="1">Catalytic subunit of the periplasmic nitrate reductase complex NapAB. Receives electrons from NapB and catalyzes the reduction of nitrate to nitrite.</text>
</comment>
<comment type="catalytic activity">
    <reaction evidence="1">
        <text>2 Fe(II)-[cytochrome] + nitrate + 2 H(+) = 2 Fe(III)-[cytochrome] + nitrite + H2O</text>
        <dbReference type="Rhea" id="RHEA:12909"/>
        <dbReference type="Rhea" id="RHEA-COMP:11777"/>
        <dbReference type="Rhea" id="RHEA-COMP:11778"/>
        <dbReference type="ChEBI" id="CHEBI:15377"/>
        <dbReference type="ChEBI" id="CHEBI:15378"/>
        <dbReference type="ChEBI" id="CHEBI:16301"/>
        <dbReference type="ChEBI" id="CHEBI:17632"/>
        <dbReference type="ChEBI" id="CHEBI:29033"/>
        <dbReference type="ChEBI" id="CHEBI:29034"/>
        <dbReference type="EC" id="1.9.6.1"/>
    </reaction>
</comment>
<comment type="cofactor">
    <cofactor evidence="1">
        <name>[4Fe-4S] cluster</name>
        <dbReference type="ChEBI" id="CHEBI:49883"/>
    </cofactor>
    <text evidence="1">Binds 1 [4Fe-4S] cluster.</text>
</comment>
<comment type="cofactor">
    <cofactor evidence="1">
        <name>Mo-bis(molybdopterin guanine dinucleotide)</name>
        <dbReference type="ChEBI" id="CHEBI:60539"/>
    </cofactor>
    <text evidence="1">Binds 1 molybdenum-bis(molybdopterin guanine dinucleotide) (Mo-bis-MGD) cofactor per subunit.</text>
</comment>
<comment type="subunit">
    <text evidence="1">Component of the periplasmic nitrate reductase NapAB complex composed of NapA and NapB.</text>
</comment>
<comment type="subcellular location">
    <subcellularLocation>
        <location evidence="1">Periplasm</location>
    </subcellularLocation>
</comment>
<comment type="PTM">
    <text evidence="1">Predicted to be exported by the Tat system. The position of the signal peptide cleavage has not been experimentally proven.</text>
</comment>
<comment type="similarity">
    <text evidence="1">Belongs to the prokaryotic molybdopterin-containing oxidoreductase family. NasA/NapA/NarB subfamily.</text>
</comment>
<gene>
    <name evidence="1" type="primary">napA</name>
    <name type="ordered locus">VC0395_0617</name>
    <name type="ordered locus">VC395_A0634</name>
</gene>
<evidence type="ECO:0000255" key="1">
    <source>
        <dbReference type="HAMAP-Rule" id="MF_01630"/>
    </source>
</evidence>
<reference key="1">
    <citation type="submission" date="2007-03" db="EMBL/GenBank/DDBJ databases">
        <authorList>
            <person name="Heidelberg J."/>
        </authorList>
    </citation>
    <scope>NUCLEOTIDE SEQUENCE [LARGE SCALE GENOMIC DNA]</scope>
    <source>
        <strain>ATCC 39541 / Classical Ogawa 395 / O395</strain>
    </source>
</reference>
<reference key="2">
    <citation type="journal article" date="2008" name="PLoS ONE">
        <title>A recalibrated molecular clock and independent origins for the cholera pandemic clones.</title>
        <authorList>
            <person name="Feng L."/>
            <person name="Reeves P.R."/>
            <person name="Lan R."/>
            <person name="Ren Y."/>
            <person name="Gao C."/>
            <person name="Zhou Z."/>
            <person name="Ren Y."/>
            <person name="Cheng J."/>
            <person name="Wang W."/>
            <person name="Wang J."/>
            <person name="Qian W."/>
            <person name="Li D."/>
            <person name="Wang L."/>
        </authorList>
    </citation>
    <scope>NUCLEOTIDE SEQUENCE [LARGE SCALE GENOMIC DNA]</scope>
    <source>
        <strain>ATCC 39541 / Classical Ogawa 395 / O395</strain>
    </source>
</reference>
<sequence>MKMTRRAFVKANAAASAAAVAGITLPASATNLIASSDQTAIHWDKAPCRFCGTGCSVLVGTQDGRVVATQGDPEAPVNKGLNCIKGYFLSKIMYGQDRLKTPLLRMKDGQYHKDGEFTPVSWDTAFDVMAEKWKASLKTKGPTSVGMFGSGQWTVMEGYAAVKLMKAGFRSNNIDPNARHCMASAVVGFMRTFGIDEPMGCYDDFEHADAFVLWGSNMAEMHPVLWTRITDRRLSHPHVKVNVLSTYYHRSFELADHGYIFHPQSDLAIANFIANYIIQNDAVNWDFVNKHTHFKQAVTDIGYGLRDDHPLQKKAKNANSGDVSDISFEEYKKSVAPYTVEKASEISGVSPDKLITLAKQYADPNTKVMSLWTMGMNQHTRGVWMQSLVYNLHLLTGKIATPGNSPFSLTGQPSACGTAREVGTFAHRLPADMVVANPKHRAIAEKVWKLPEGTIPEKPGFHAVQQDRMLKDGVLNCYWVQCNNNMQAGPNINEERLPGYRNPENFIVVSDAYPTVTAQAADLVLPTAMWVEKEGAYGNAERRTQVWYQQVKTVGESHSDSWQVIEFSKRFKVEDVWPEELLAKAPQYRGKTLYDVLFKNGQVDKFPLSEARELNDDAHHFGFYIQKGLFEEYAEFGRGHGHDLAPYDVYHQVRGLRWPVVDGKETKWRFKEGSDPYAKAGSGWDFYGKPDGKAWIISSPYEAPPEMPNEEYDLWLCTGRVLEHWHTGTMTRRVPELYKAVPDALCFMHHEDAQARGLRRGDEVLISNSRGEVRVRVETRGRNKPPKGLVFVPFFDARILVNKLILDATDPLSKQTDFKKCPVKITKVA</sequence>
<name>NAPA_VIBC3</name>
<proteinExistence type="inferred from homology"/>
<accession>A5EZX9</accession>
<accession>C3M5Q5</accession>
<protein>
    <recommendedName>
        <fullName evidence="1">Periplasmic nitrate reductase</fullName>
        <ecNumber evidence="1">1.9.6.1</ecNumber>
    </recommendedName>
</protein>
<dbReference type="EC" id="1.9.6.1" evidence="1"/>
<dbReference type="EMBL" id="CP000626">
    <property type="protein sequence ID" value="ABQ18717.1"/>
    <property type="molecule type" value="Genomic_DNA"/>
</dbReference>
<dbReference type="EMBL" id="CP001236">
    <property type="protein sequence ID" value="ACP11468.1"/>
    <property type="molecule type" value="Genomic_DNA"/>
</dbReference>
<dbReference type="RefSeq" id="WP_000784576.1">
    <property type="nucleotide sequence ID" value="NZ_JAACZH010000013.1"/>
</dbReference>
<dbReference type="SMR" id="A5EZX9"/>
<dbReference type="KEGG" id="vco:VC0395_0617"/>
<dbReference type="KEGG" id="vcr:VC395_A0634"/>
<dbReference type="PATRIC" id="fig|345073.21.peg.3374"/>
<dbReference type="eggNOG" id="COG0243">
    <property type="taxonomic scope" value="Bacteria"/>
</dbReference>
<dbReference type="HOGENOM" id="CLU_000422_13_4_6"/>
<dbReference type="OrthoDB" id="9810782at2"/>
<dbReference type="Proteomes" id="UP000000249">
    <property type="component" value="Chromosome 1"/>
</dbReference>
<dbReference type="GO" id="GO:0016020">
    <property type="term" value="C:membrane"/>
    <property type="evidence" value="ECO:0007669"/>
    <property type="project" value="TreeGrafter"/>
</dbReference>
<dbReference type="GO" id="GO:0009325">
    <property type="term" value="C:nitrate reductase complex"/>
    <property type="evidence" value="ECO:0007669"/>
    <property type="project" value="TreeGrafter"/>
</dbReference>
<dbReference type="GO" id="GO:0042597">
    <property type="term" value="C:periplasmic space"/>
    <property type="evidence" value="ECO:0007669"/>
    <property type="project" value="UniProtKB-SubCell"/>
</dbReference>
<dbReference type="GO" id="GO:0051539">
    <property type="term" value="F:4 iron, 4 sulfur cluster binding"/>
    <property type="evidence" value="ECO:0007669"/>
    <property type="project" value="UniProtKB-KW"/>
</dbReference>
<dbReference type="GO" id="GO:0009055">
    <property type="term" value="F:electron transfer activity"/>
    <property type="evidence" value="ECO:0007669"/>
    <property type="project" value="UniProtKB-UniRule"/>
</dbReference>
<dbReference type="GO" id="GO:0005506">
    <property type="term" value="F:iron ion binding"/>
    <property type="evidence" value="ECO:0007669"/>
    <property type="project" value="UniProtKB-UniRule"/>
</dbReference>
<dbReference type="GO" id="GO:0030151">
    <property type="term" value="F:molybdenum ion binding"/>
    <property type="evidence" value="ECO:0007669"/>
    <property type="project" value="InterPro"/>
</dbReference>
<dbReference type="GO" id="GO:0043546">
    <property type="term" value="F:molybdopterin cofactor binding"/>
    <property type="evidence" value="ECO:0007669"/>
    <property type="project" value="InterPro"/>
</dbReference>
<dbReference type="GO" id="GO:0050140">
    <property type="term" value="F:nitrate reductase (cytochrome) activity"/>
    <property type="evidence" value="ECO:0007669"/>
    <property type="project" value="UniProtKB-EC"/>
</dbReference>
<dbReference type="GO" id="GO:0045333">
    <property type="term" value="P:cellular respiration"/>
    <property type="evidence" value="ECO:0007669"/>
    <property type="project" value="UniProtKB-ARBA"/>
</dbReference>
<dbReference type="GO" id="GO:0006777">
    <property type="term" value="P:Mo-molybdopterin cofactor biosynthetic process"/>
    <property type="evidence" value="ECO:0007669"/>
    <property type="project" value="UniProtKB-UniRule"/>
</dbReference>
<dbReference type="GO" id="GO:0042128">
    <property type="term" value="P:nitrate assimilation"/>
    <property type="evidence" value="ECO:0007669"/>
    <property type="project" value="UniProtKB-UniRule"/>
</dbReference>
<dbReference type="CDD" id="cd02791">
    <property type="entry name" value="MopB_CT_Nitrate-R-NapA-like"/>
    <property type="match status" value="1"/>
</dbReference>
<dbReference type="CDD" id="cd02754">
    <property type="entry name" value="MopB_Nitrate-R-NapA-like"/>
    <property type="match status" value="1"/>
</dbReference>
<dbReference type="FunFam" id="2.40.40.20:FF:000005">
    <property type="entry name" value="Periplasmic nitrate reductase"/>
    <property type="match status" value="1"/>
</dbReference>
<dbReference type="Gene3D" id="2.40.40.20">
    <property type="match status" value="1"/>
</dbReference>
<dbReference type="Gene3D" id="3.30.200.210">
    <property type="match status" value="1"/>
</dbReference>
<dbReference type="Gene3D" id="3.40.50.740">
    <property type="match status" value="1"/>
</dbReference>
<dbReference type="Gene3D" id="3.40.228.10">
    <property type="entry name" value="Dimethylsulfoxide Reductase, domain 2"/>
    <property type="match status" value="1"/>
</dbReference>
<dbReference type="HAMAP" id="MF_01630">
    <property type="entry name" value="Nitrate_reduct_NapA"/>
    <property type="match status" value="1"/>
</dbReference>
<dbReference type="InterPro" id="IPR009010">
    <property type="entry name" value="Asp_de-COase-like_dom_sf"/>
</dbReference>
<dbReference type="InterPro" id="IPR041957">
    <property type="entry name" value="CT_Nitrate-R-NapA-like"/>
</dbReference>
<dbReference type="InterPro" id="IPR006657">
    <property type="entry name" value="MoPterin_dinucl-bd_dom"/>
</dbReference>
<dbReference type="InterPro" id="IPR006656">
    <property type="entry name" value="Mopterin_OxRdtase"/>
</dbReference>
<dbReference type="InterPro" id="IPR006963">
    <property type="entry name" value="Mopterin_OxRdtase_4Fe-4S_dom"/>
</dbReference>
<dbReference type="InterPro" id="IPR027467">
    <property type="entry name" value="MopterinOxRdtase_cofactor_BS"/>
</dbReference>
<dbReference type="InterPro" id="IPR010051">
    <property type="entry name" value="Periplasm_NO3_reductase_lsu"/>
</dbReference>
<dbReference type="InterPro" id="IPR050123">
    <property type="entry name" value="Prok_molybdopt-oxidoreductase"/>
</dbReference>
<dbReference type="InterPro" id="IPR006311">
    <property type="entry name" value="TAT_signal"/>
</dbReference>
<dbReference type="NCBIfam" id="TIGR01706">
    <property type="entry name" value="NAPA"/>
    <property type="match status" value="1"/>
</dbReference>
<dbReference type="NCBIfam" id="NF010055">
    <property type="entry name" value="PRK13532.1"/>
    <property type="match status" value="1"/>
</dbReference>
<dbReference type="PANTHER" id="PTHR43105:SF11">
    <property type="entry name" value="PERIPLASMIC NITRATE REDUCTASE"/>
    <property type="match status" value="1"/>
</dbReference>
<dbReference type="PANTHER" id="PTHR43105">
    <property type="entry name" value="RESPIRATORY NITRATE REDUCTASE"/>
    <property type="match status" value="1"/>
</dbReference>
<dbReference type="Pfam" id="PF04879">
    <property type="entry name" value="Molybdop_Fe4S4"/>
    <property type="match status" value="1"/>
</dbReference>
<dbReference type="Pfam" id="PF00384">
    <property type="entry name" value="Molybdopterin"/>
    <property type="match status" value="1"/>
</dbReference>
<dbReference type="Pfam" id="PF01568">
    <property type="entry name" value="Molydop_binding"/>
    <property type="match status" value="1"/>
</dbReference>
<dbReference type="SMART" id="SM00926">
    <property type="entry name" value="Molybdop_Fe4S4"/>
    <property type="match status" value="1"/>
</dbReference>
<dbReference type="SUPFAM" id="SSF50692">
    <property type="entry name" value="ADC-like"/>
    <property type="match status" value="1"/>
</dbReference>
<dbReference type="SUPFAM" id="SSF53706">
    <property type="entry name" value="Formate dehydrogenase/DMSO reductase, domains 1-3"/>
    <property type="match status" value="1"/>
</dbReference>
<dbReference type="PROSITE" id="PS51669">
    <property type="entry name" value="4FE4S_MOW_BIS_MGD"/>
    <property type="match status" value="1"/>
</dbReference>
<dbReference type="PROSITE" id="PS00551">
    <property type="entry name" value="MOLYBDOPTERIN_PROK_1"/>
    <property type="match status" value="1"/>
</dbReference>
<dbReference type="PROSITE" id="PS51318">
    <property type="entry name" value="TAT"/>
    <property type="match status" value="1"/>
</dbReference>
<keyword id="KW-0004">4Fe-4S</keyword>
<keyword id="KW-0249">Electron transport</keyword>
<keyword id="KW-0408">Iron</keyword>
<keyword id="KW-0411">Iron-sulfur</keyword>
<keyword id="KW-0479">Metal-binding</keyword>
<keyword id="KW-0500">Molybdenum</keyword>
<keyword id="KW-0534">Nitrate assimilation</keyword>
<keyword id="KW-0560">Oxidoreductase</keyword>
<keyword id="KW-0574">Periplasm</keyword>
<keyword id="KW-0732">Signal</keyword>
<keyword id="KW-0813">Transport</keyword>